<organism>
    <name type="scientific">Nitratidesulfovibrio vulgaris (strain DP4)</name>
    <name type="common">Desulfovibrio vulgaris</name>
    <dbReference type="NCBI Taxonomy" id="391774"/>
    <lineage>
        <taxon>Bacteria</taxon>
        <taxon>Pseudomonadati</taxon>
        <taxon>Thermodesulfobacteriota</taxon>
        <taxon>Desulfovibrionia</taxon>
        <taxon>Desulfovibrionales</taxon>
        <taxon>Desulfovibrionaceae</taxon>
        <taxon>Nitratidesulfovibrio</taxon>
    </lineage>
</organism>
<accession>A1VBE0</accession>
<proteinExistence type="inferred from homology"/>
<comment type="function">
    <text evidence="1">Specifically methylates the N4 position of cytidine in position 1402 (C1402) of 16S rRNA.</text>
</comment>
<comment type="catalytic activity">
    <reaction evidence="1">
        <text>cytidine(1402) in 16S rRNA + S-adenosyl-L-methionine = N(4)-methylcytidine(1402) in 16S rRNA + S-adenosyl-L-homocysteine + H(+)</text>
        <dbReference type="Rhea" id="RHEA:42928"/>
        <dbReference type="Rhea" id="RHEA-COMP:10286"/>
        <dbReference type="Rhea" id="RHEA-COMP:10287"/>
        <dbReference type="ChEBI" id="CHEBI:15378"/>
        <dbReference type="ChEBI" id="CHEBI:57856"/>
        <dbReference type="ChEBI" id="CHEBI:59789"/>
        <dbReference type="ChEBI" id="CHEBI:74506"/>
        <dbReference type="ChEBI" id="CHEBI:82748"/>
        <dbReference type="EC" id="2.1.1.199"/>
    </reaction>
</comment>
<comment type="subcellular location">
    <subcellularLocation>
        <location evidence="1">Cytoplasm</location>
    </subcellularLocation>
</comment>
<comment type="similarity">
    <text evidence="1">Belongs to the methyltransferase superfamily. RsmH family.</text>
</comment>
<dbReference type="EC" id="2.1.1.199" evidence="1"/>
<dbReference type="EMBL" id="CP000527">
    <property type="protein sequence ID" value="ABM27756.1"/>
    <property type="molecule type" value="Genomic_DNA"/>
</dbReference>
<dbReference type="RefSeq" id="WP_010939782.1">
    <property type="nucleotide sequence ID" value="NC_008751.1"/>
</dbReference>
<dbReference type="SMR" id="A1VBE0"/>
<dbReference type="KEGG" id="dvl:Dvul_0733"/>
<dbReference type="HOGENOM" id="CLU_038422_2_0_7"/>
<dbReference type="Proteomes" id="UP000009173">
    <property type="component" value="Chromosome"/>
</dbReference>
<dbReference type="GO" id="GO:0005737">
    <property type="term" value="C:cytoplasm"/>
    <property type="evidence" value="ECO:0007669"/>
    <property type="project" value="UniProtKB-SubCell"/>
</dbReference>
<dbReference type="GO" id="GO:0071424">
    <property type="term" value="F:rRNA (cytosine-N4-)-methyltransferase activity"/>
    <property type="evidence" value="ECO:0007669"/>
    <property type="project" value="UniProtKB-UniRule"/>
</dbReference>
<dbReference type="GO" id="GO:0070475">
    <property type="term" value="P:rRNA base methylation"/>
    <property type="evidence" value="ECO:0007669"/>
    <property type="project" value="UniProtKB-UniRule"/>
</dbReference>
<dbReference type="Gene3D" id="1.10.150.170">
    <property type="entry name" value="Putative methyltransferase TM0872, insert domain"/>
    <property type="match status" value="1"/>
</dbReference>
<dbReference type="Gene3D" id="3.40.50.150">
    <property type="entry name" value="Vaccinia Virus protein VP39"/>
    <property type="match status" value="1"/>
</dbReference>
<dbReference type="HAMAP" id="MF_01007">
    <property type="entry name" value="16SrRNA_methyltr_H"/>
    <property type="match status" value="1"/>
</dbReference>
<dbReference type="InterPro" id="IPR002903">
    <property type="entry name" value="RsmH"/>
</dbReference>
<dbReference type="InterPro" id="IPR023397">
    <property type="entry name" value="SAM-dep_MeTrfase_MraW_recog"/>
</dbReference>
<dbReference type="InterPro" id="IPR029063">
    <property type="entry name" value="SAM-dependent_MTases_sf"/>
</dbReference>
<dbReference type="NCBIfam" id="TIGR00006">
    <property type="entry name" value="16S rRNA (cytosine(1402)-N(4))-methyltransferase RsmH"/>
    <property type="match status" value="1"/>
</dbReference>
<dbReference type="PANTHER" id="PTHR11265:SF0">
    <property type="entry name" value="12S RRNA N4-METHYLCYTIDINE METHYLTRANSFERASE"/>
    <property type="match status" value="1"/>
</dbReference>
<dbReference type="PANTHER" id="PTHR11265">
    <property type="entry name" value="S-ADENOSYL-METHYLTRANSFERASE MRAW"/>
    <property type="match status" value="1"/>
</dbReference>
<dbReference type="Pfam" id="PF01795">
    <property type="entry name" value="Methyltransf_5"/>
    <property type="match status" value="1"/>
</dbReference>
<dbReference type="PIRSF" id="PIRSF004486">
    <property type="entry name" value="MraW"/>
    <property type="match status" value="1"/>
</dbReference>
<dbReference type="SUPFAM" id="SSF81799">
    <property type="entry name" value="Putative methyltransferase TM0872, insert domain"/>
    <property type="match status" value="1"/>
</dbReference>
<dbReference type="SUPFAM" id="SSF53335">
    <property type="entry name" value="S-adenosyl-L-methionine-dependent methyltransferases"/>
    <property type="match status" value="1"/>
</dbReference>
<feature type="chain" id="PRO_0000386855" description="Ribosomal RNA small subunit methyltransferase H">
    <location>
        <begin position="1"/>
        <end position="323"/>
    </location>
</feature>
<feature type="binding site" evidence="1">
    <location>
        <begin position="44"/>
        <end position="46"/>
    </location>
    <ligand>
        <name>S-adenosyl-L-methionine</name>
        <dbReference type="ChEBI" id="CHEBI:59789"/>
    </ligand>
</feature>
<feature type="binding site" evidence="1">
    <location>
        <position position="64"/>
    </location>
    <ligand>
        <name>S-adenosyl-L-methionine</name>
        <dbReference type="ChEBI" id="CHEBI:59789"/>
    </ligand>
</feature>
<feature type="binding site" evidence="1">
    <location>
        <position position="94"/>
    </location>
    <ligand>
        <name>S-adenosyl-L-methionine</name>
        <dbReference type="ChEBI" id="CHEBI:59789"/>
    </ligand>
</feature>
<feature type="binding site" evidence="1">
    <location>
        <position position="112"/>
    </location>
    <ligand>
        <name>S-adenosyl-L-methionine</name>
        <dbReference type="ChEBI" id="CHEBI:59789"/>
    </ligand>
</feature>
<feature type="binding site" evidence="1">
    <location>
        <position position="119"/>
    </location>
    <ligand>
        <name>S-adenosyl-L-methionine</name>
        <dbReference type="ChEBI" id="CHEBI:59789"/>
    </ligand>
</feature>
<sequence length="323" mass="35972">MSEHPENMTAPEWAAHIPVLLEEVLEYLAPRKGGRYLDGTLGLAGHASAVLERAGEGTELCGLDRDPEALRRATARLAPFAGQTHLYHLRYSEFEEALDDLGWPTVDGALIDIGVSSMQIDLAERGFSFHADGPLDMRMDPDAHESAWRLVNRERHEVLRDIIARYGEEPMAGRIARAIVDARNTGSIDTTLQLAAIVERAYPAKWRATARNHPATRTFQALRMAVNDELGELERFLDAILARLAPGGRLVVISFHSLEDRIVKHRMRHWAEGCRCPRHVPRCVCGHSPEVRILTKRPVTATDGELARNPRASSAKLRAAEKV</sequence>
<name>RSMH_NITV4</name>
<evidence type="ECO:0000255" key="1">
    <source>
        <dbReference type="HAMAP-Rule" id="MF_01007"/>
    </source>
</evidence>
<reference key="1">
    <citation type="journal article" date="2009" name="Environ. Microbiol.">
        <title>Contribution of mobile genetic elements to Desulfovibrio vulgaris genome plasticity.</title>
        <authorList>
            <person name="Walker C.B."/>
            <person name="Stolyar S."/>
            <person name="Chivian D."/>
            <person name="Pinel N."/>
            <person name="Gabster J.A."/>
            <person name="Dehal P.S."/>
            <person name="He Z."/>
            <person name="Yang Z.K."/>
            <person name="Yen H.C."/>
            <person name="Zhou J."/>
            <person name="Wall J.D."/>
            <person name="Hazen T.C."/>
            <person name="Arkin A.P."/>
            <person name="Stahl D.A."/>
        </authorList>
    </citation>
    <scope>NUCLEOTIDE SEQUENCE [LARGE SCALE GENOMIC DNA]</scope>
    <source>
        <strain>DP4</strain>
    </source>
</reference>
<gene>
    <name evidence="1" type="primary">rsmH</name>
    <name type="synonym">mraW</name>
    <name type="ordered locus">Dvul_0733</name>
</gene>
<keyword id="KW-0963">Cytoplasm</keyword>
<keyword id="KW-0489">Methyltransferase</keyword>
<keyword id="KW-0698">rRNA processing</keyword>
<keyword id="KW-0949">S-adenosyl-L-methionine</keyword>
<keyword id="KW-0808">Transferase</keyword>
<protein>
    <recommendedName>
        <fullName evidence="1">Ribosomal RNA small subunit methyltransferase H</fullName>
        <ecNumber evidence="1">2.1.1.199</ecNumber>
    </recommendedName>
    <alternativeName>
        <fullName evidence="1">16S rRNA m(4)C1402 methyltransferase</fullName>
    </alternativeName>
    <alternativeName>
        <fullName evidence="1">rRNA (cytosine-N(4)-)-methyltransferase RsmH</fullName>
    </alternativeName>
</protein>